<sequence length="522" mass="56906">MGQEKHTDAASQSRDPEAVAAHENDQLRQRNHALAKALTRATEELRKAKAQLEQFMAPPLTMATMVRVHRCSTDEHGVRHASAEILNGNRRQIVPLSPTVNPAQLGSGQGVLLDANMVIVDSCETPTTGPMRAVSESLADGRLIVSDVGGNRGVVMRASAVARTPINVDDRVVIDPSGTYVLSVLPQEQAQDLLLEETPDVSFTDIGGLDEQIARIRDAVQLPFQHRDLFDRFDLKAPKGVLLYGPPGNGKTLIAKAIAHELAAGSGNDGVFLSVKGPELLNKFVGESERLIRRIFERAKELSGAGRPVIVFIDEMDSLLRTRGTGVSSDVETTIVPQFLTELDGVESLDDVMVIGASNRIDMIDPAVLRPGRLDVKIHVTRPDETAAMAITRHYLTDALPLEPGRDADALAASLVRDLFRRDESRLLATLDEQGRRRGIYMADIVSGAMLRNIVDRAKTKAVKAEILHGSVSRDDEPQGITEARIHEAIDDEYEQNRSTINETDPGQWLRINALTLAADGV</sequence>
<name>ARC_BIFA0</name>
<feature type="chain" id="PRO_0000396964" description="AAA ATPase forming ring-shaped complexes">
    <location>
        <begin position="1"/>
        <end position="522"/>
    </location>
</feature>
<feature type="region of interest" description="Disordered" evidence="2">
    <location>
        <begin position="1"/>
        <end position="26"/>
    </location>
</feature>
<feature type="coiled-coil region" evidence="1">
    <location>
        <begin position="20"/>
        <end position="57"/>
    </location>
</feature>
<feature type="binding site" evidence="1">
    <location>
        <begin position="248"/>
        <end position="253"/>
    </location>
    <ligand>
        <name>ATP</name>
        <dbReference type="ChEBI" id="CHEBI:30616"/>
    </ligand>
</feature>
<gene>
    <name evidence="1" type="primary">arc</name>
    <name type="ordered locus">BLA_1165</name>
</gene>
<proteinExistence type="inferred from homology"/>
<keyword id="KW-0067">ATP-binding</keyword>
<keyword id="KW-0175">Coiled coil</keyword>
<keyword id="KW-0547">Nucleotide-binding</keyword>
<keyword id="KW-1185">Reference proteome</keyword>
<organism>
    <name type="scientific">Bifidobacterium animalis subsp. lactis (strain AD011)</name>
    <dbReference type="NCBI Taxonomy" id="442563"/>
    <lineage>
        <taxon>Bacteria</taxon>
        <taxon>Bacillati</taxon>
        <taxon>Actinomycetota</taxon>
        <taxon>Actinomycetes</taxon>
        <taxon>Bifidobacteriales</taxon>
        <taxon>Bifidobacteriaceae</taxon>
        <taxon>Bifidobacterium</taxon>
    </lineage>
</organism>
<dbReference type="EMBL" id="CP001213">
    <property type="protein sequence ID" value="ACL29453.1"/>
    <property type="molecule type" value="Genomic_DNA"/>
</dbReference>
<dbReference type="RefSeq" id="WP_004218902.1">
    <property type="nucleotide sequence ID" value="NC_011835.1"/>
</dbReference>
<dbReference type="SMR" id="B8DTX4"/>
<dbReference type="STRING" id="442563.BLA_1165"/>
<dbReference type="GeneID" id="29695932"/>
<dbReference type="KEGG" id="bla:BLA_1165"/>
<dbReference type="HOGENOM" id="CLU_036054_0_0_11"/>
<dbReference type="Proteomes" id="UP000002456">
    <property type="component" value="Chromosome"/>
</dbReference>
<dbReference type="GO" id="GO:0000502">
    <property type="term" value="C:proteasome complex"/>
    <property type="evidence" value="ECO:0007669"/>
    <property type="project" value="InterPro"/>
</dbReference>
<dbReference type="GO" id="GO:0005524">
    <property type="term" value="F:ATP binding"/>
    <property type="evidence" value="ECO:0007669"/>
    <property type="project" value="UniProtKB-UniRule"/>
</dbReference>
<dbReference type="GO" id="GO:0016887">
    <property type="term" value="F:ATP hydrolysis activity"/>
    <property type="evidence" value="ECO:0007669"/>
    <property type="project" value="UniProtKB-UniRule"/>
</dbReference>
<dbReference type="GO" id="GO:0019941">
    <property type="term" value="P:modification-dependent protein catabolic process"/>
    <property type="evidence" value="ECO:0007669"/>
    <property type="project" value="InterPro"/>
</dbReference>
<dbReference type="GO" id="GO:0010498">
    <property type="term" value="P:proteasomal protein catabolic process"/>
    <property type="evidence" value="ECO:0007669"/>
    <property type="project" value="InterPro"/>
</dbReference>
<dbReference type="FunFam" id="3.40.50.300:FF:001025">
    <property type="entry name" value="ATPase family, AAA domain-containing 2B"/>
    <property type="match status" value="1"/>
</dbReference>
<dbReference type="Gene3D" id="1.10.8.60">
    <property type="match status" value="1"/>
</dbReference>
<dbReference type="Gene3D" id="2.40.50.140">
    <property type="entry name" value="Nucleic acid-binding proteins"/>
    <property type="match status" value="1"/>
</dbReference>
<dbReference type="Gene3D" id="3.40.50.300">
    <property type="entry name" value="P-loop containing nucleotide triphosphate hydrolases"/>
    <property type="match status" value="1"/>
</dbReference>
<dbReference type="HAMAP" id="MF_02112">
    <property type="entry name" value="ARC_ATPase"/>
    <property type="match status" value="1"/>
</dbReference>
<dbReference type="InterPro" id="IPR003593">
    <property type="entry name" value="AAA+_ATPase"/>
</dbReference>
<dbReference type="InterPro" id="IPR050168">
    <property type="entry name" value="AAA_ATPase_domain"/>
</dbReference>
<dbReference type="InterPro" id="IPR003959">
    <property type="entry name" value="ATPase_AAA_core"/>
</dbReference>
<dbReference type="InterPro" id="IPR003960">
    <property type="entry name" value="ATPase_AAA_CS"/>
</dbReference>
<dbReference type="InterPro" id="IPR012340">
    <property type="entry name" value="NA-bd_OB-fold"/>
</dbReference>
<dbReference type="InterPro" id="IPR027417">
    <property type="entry name" value="P-loop_NTPase"/>
</dbReference>
<dbReference type="InterPro" id="IPR032501">
    <property type="entry name" value="Prot_ATP_ID_OB_2nd"/>
</dbReference>
<dbReference type="InterPro" id="IPR041626">
    <property type="entry name" value="Prot_ATP_ID_OB_N"/>
</dbReference>
<dbReference type="InterPro" id="IPR022482">
    <property type="entry name" value="Proteasome_ATPase"/>
</dbReference>
<dbReference type="NCBIfam" id="TIGR03689">
    <property type="entry name" value="pup_AAA"/>
    <property type="match status" value="1"/>
</dbReference>
<dbReference type="PANTHER" id="PTHR23077">
    <property type="entry name" value="AAA-FAMILY ATPASE"/>
    <property type="match status" value="1"/>
</dbReference>
<dbReference type="PANTHER" id="PTHR23077:SF144">
    <property type="entry name" value="PROTEASOME-ASSOCIATED ATPASE"/>
    <property type="match status" value="1"/>
</dbReference>
<dbReference type="Pfam" id="PF00004">
    <property type="entry name" value="AAA"/>
    <property type="match status" value="1"/>
</dbReference>
<dbReference type="Pfam" id="PF16450">
    <property type="entry name" value="Prot_ATP_ID_OB_C"/>
    <property type="match status" value="1"/>
</dbReference>
<dbReference type="Pfam" id="PF17758">
    <property type="entry name" value="Prot_ATP_ID_OB_N"/>
    <property type="match status" value="1"/>
</dbReference>
<dbReference type="SMART" id="SM00382">
    <property type="entry name" value="AAA"/>
    <property type="match status" value="1"/>
</dbReference>
<dbReference type="SUPFAM" id="SSF52540">
    <property type="entry name" value="P-loop containing nucleoside triphosphate hydrolases"/>
    <property type="match status" value="1"/>
</dbReference>
<dbReference type="PROSITE" id="PS00674">
    <property type="entry name" value="AAA"/>
    <property type="match status" value="1"/>
</dbReference>
<protein>
    <recommendedName>
        <fullName evidence="1">AAA ATPase forming ring-shaped complexes</fullName>
        <shortName evidence="1">ARC</shortName>
    </recommendedName>
</protein>
<evidence type="ECO:0000255" key="1">
    <source>
        <dbReference type="HAMAP-Rule" id="MF_02112"/>
    </source>
</evidence>
<evidence type="ECO:0000256" key="2">
    <source>
        <dbReference type="SAM" id="MobiDB-lite"/>
    </source>
</evidence>
<reference key="1">
    <citation type="journal article" date="2009" name="J. Bacteriol.">
        <title>Genome sequence of the probiotic bacterium Bifidobacterium animalis subsp. lactis AD011.</title>
        <authorList>
            <person name="Kim J.F."/>
            <person name="Jeong H."/>
            <person name="Yu D.S."/>
            <person name="Choi S.-H."/>
            <person name="Hur C.-G."/>
            <person name="Park M.-S."/>
            <person name="Yoon S.H."/>
            <person name="Kim D.-W."/>
            <person name="Ji G.E."/>
            <person name="Park H.-S."/>
            <person name="Oh T.K."/>
        </authorList>
    </citation>
    <scope>NUCLEOTIDE SEQUENCE [LARGE SCALE GENOMIC DNA]</scope>
    <source>
        <strain>AD011</strain>
    </source>
</reference>
<comment type="subunit">
    <text evidence="1">Homohexamer. Assembles into a hexameric ring structure.</text>
</comment>
<comment type="similarity">
    <text evidence="1">Belongs to the AAA ATPase family.</text>
</comment>
<accession>B8DTX4</accession>